<dbReference type="EMBL" id="CP000697">
    <property type="protein sequence ID" value="ABQ31139.1"/>
    <property type="molecule type" value="Genomic_DNA"/>
</dbReference>
<dbReference type="RefSeq" id="WP_007424181.1">
    <property type="nucleotide sequence ID" value="NC_009484.1"/>
</dbReference>
<dbReference type="SMR" id="A5FZV7"/>
<dbReference type="STRING" id="349163.Acry_1938"/>
<dbReference type="KEGG" id="acr:Acry_1938"/>
<dbReference type="eggNOG" id="COG0255">
    <property type="taxonomic scope" value="Bacteria"/>
</dbReference>
<dbReference type="HOGENOM" id="CLU_158491_1_0_5"/>
<dbReference type="Proteomes" id="UP000000245">
    <property type="component" value="Chromosome"/>
</dbReference>
<dbReference type="GO" id="GO:0022625">
    <property type="term" value="C:cytosolic large ribosomal subunit"/>
    <property type="evidence" value="ECO:0007669"/>
    <property type="project" value="TreeGrafter"/>
</dbReference>
<dbReference type="GO" id="GO:0003735">
    <property type="term" value="F:structural constituent of ribosome"/>
    <property type="evidence" value="ECO:0007669"/>
    <property type="project" value="InterPro"/>
</dbReference>
<dbReference type="GO" id="GO:0006412">
    <property type="term" value="P:translation"/>
    <property type="evidence" value="ECO:0007669"/>
    <property type="project" value="UniProtKB-UniRule"/>
</dbReference>
<dbReference type="CDD" id="cd00427">
    <property type="entry name" value="Ribosomal_L29_HIP"/>
    <property type="match status" value="1"/>
</dbReference>
<dbReference type="FunFam" id="1.10.287.310:FF:000001">
    <property type="entry name" value="50S ribosomal protein L29"/>
    <property type="match status" value="1"/>
</dbReference>
<dbReference type="Gene3D" id="1.10.287.310">
    <property type="match status" value="1"/>
</dbReference>
<dbReference type="HAMAP" id="MF_00374">
    <property type="entry name" value="Ribosomal_uL29"/>
    <property type="match status" value="1"/>
</dbReference>
<dbReference type="InterPro" id="IPR050063">
    <property type="entry name" value="Ribosomal_protein_uL29"/>
</dbReference>
<dbReference type="InterPro" id="IPR001854">
    <property type="entry name" value="Ribosomal_uL29"/>
</dbReference>
<dbReference type="InterPro" id="IPR018254">
    <property type="entry name" value="Ribosomal_uL29_CS"/>
</dbReference>
<dbReference type="InterPro" id="IPR036049">
    <property type="entry name" value="Ribosomal_uL29_sf"/>
</dbReference>
<dbReference type="NCBIfam" id="TIGR00012">
    <property type="entry name" value="L29"/>
    <property type="match status" value="1"/>
</dbReference>
<dbReference type="PANTHER" id="PTHR10916">
    <property type="entry name" value="60S RIBOSOMAL PROTEIN L35/50S RIBOSOMAL PROTEIN L29"/>
    <property type="match status" value="1"/>
</dbReference>
<dbReference type="PANTHER" id="PTHR10916:SF0">
    <property type="entry name" value="LARGE RIBOSOMAL SUBUNIT PROTEIN UL29C"/>
    <property type="match status" value="1"/>
</dbReference>
<dbReference type="Pfam" id="PF00831">
    <property type="entry name" value="Ribosomal_L29"/>
    <property type="match status" value="1"/>
</dbReference>
<dbReference type="SUPFAM" id="SSF46561">
    <property type="entry name" value="Ribosomal protein L29 (L29p)"/>
    <property type="match status" value="1"/>
</dbReference>
<dbReference type="PROSITE" id="PS00579">
    <property type="entry name" value="RIBOSOMAL_L29"/>
    <property type="match status" value="1"/>
</dbReference>
<name>RL29_ACICJ</name>
<organism>
    <name type="scientific">Acidiphilium cryptum (strain JF-5)</name>
    <dbReference type="NCBI Taxonomy" id="349163"/>
    <lineage>
        <taxon>Bacteria</taxon>
        <taxon>Pseudomonadati</taxon>
        <taxon>Pseudomonadota</taxon>
        <taxon>Alphaproteobacteria</taxon>
        <taxon>Acetobacterales</taxon>
        <taxon>Acidocellaceae</taxon>
        <taxon>Acidiphilium</taxon>
    </lineage>
</organism>
<accession>A5FZV7</accession>
<gene>
    <name evidence="1" type="primary">rpmC</name>
    <name type="ordered locus">Acry_1938</name>
</gene>
<evidence type="ECO:0000255" key="1">
    <source>
        <dbReference type="HAMAP-Rule" id="MF_00374"/>
    </source>
</evidence>
<evidence type="ECO:0000305" key="2"/>
<sequence length="68" mass="7852">MTKATDIRTKTPDELNDMLLELKREQLNLRFQRATGQQENTSQIRKARRDVARVKTIQAERARAAAKA</sequence>
<comment type="similarity">
    <text evidence="1">Belongs to the universal ribosomal protein uL29 family.</text>
</comment>
<keyword id="KW-1185">Reference proteome</keyword>
<keyword id="KW-0687">Ribonucleoprotein</keyword>
<keyword id="KW-0689">Ribosomal protein</keyword>
<feature type="chain" id="PRO_1000059960" description="Large ribosomal subunit protein uL29">
    <location>
        <begin position="1"/>
        <end position="68"/>
    </location>
</feature>
<reference key="1">
    <citation type="submission" date="2007-05" db="EMBL/GenBank/DDBJ databases">
        <title>Complete sequence of chromosome of Acidiphilium cryptum JF-5.</title>
        <authorList>
            <consortium name="US DOE Joint Genome Institute"/>
            <person name="Copeland A."/>
            <person name="Lucas S."/>
            <person name="Lapidus A."/>
            <person name="Barry K."/>
            <person name="Detter J.C."/>
            <person name="Glavina del Rio T."/>
            <person name="Hammon N."/>
            <person name="Israni S."/>
            <person name="Dalin E."/>
            <person name="Tice H."/>
            <person name="Pitluck S."/>
            <person name="Sims D."/>
            <person name="Brettin T."/>
            <person name="Bruce D."/>
            <person name="Han C."/>
            <person name="Schmutz J."/>
            <person name="Larimer F."/>
            <person name="Land M."/>
            <person name="Hauser L."/>
            <person name="Kyrpides N."/>
            <person name="Kim E."/>
            <person name="Magnuson T."/>
            <person name="Richardson P."/>
        </authorList>
    </citation>
    <scope>NUCLEOTIDE SEQUENCE [LARGE SCALE GENOMIC DNA]</scope>
    <source>
        <strain>JF-5</strain>
    </source>
</reference>
<protein>
    <recommendedName>
        <fullName evidence="1">Large ribosomal subunit protein uL29</fullName>
    </recommendedName>
    <alternativeName>
        <fullName evidence="2">50S ribosomal protein L29</fullName>
    </alternativeName>
</protein>
<proteinExistence type="inferred from homology"/>